<name>SYE_BORDL</name>
<comment type="function">
    <text evidence="1">Catalyzes the attachment of glutamate to tRNA(Glu) in a two-step reaction: glutamate is first activated by ATP to form Glu-AMP and then transferred to the acceptor end of tRNA(Glu).</text>
</comment>
<comment type="catalytic activity">
    <reaction evidence="1">
        <text>tRNA(Glu) + L-glutamate + ATP = L-glutamyl-tRNA(Glu) + AMP + diphosphate</text>
        <dbReference type="Rhea" id="RHEA:23540"/>
        <dbReference type="Rhea" id="RHEA-COMP:9663"/>
        <dbReference type="Rhea" id="RHEA-COMP:9680"/>
        <dbReference type="ChEBI" id="CHEBI:29985"/>
        <dbReference type="ChEBI" id="CHEBI:30616"/>
        <dbReference type="ChEBI" id="CHEBI:33019"/>
        <dbReference type="ChEBI" id="CHEBI:78442"/>
        <dbReference type="ChEBI" id="CHEBI:78520"/>
        <dbReference type="ChEBI" id="CHEBI:456215"/>
        <dbReference type="EC" id="6.1.1.17"/>
    </reaction>
</comment>
<comment type="cofactor">
    <cofactor evidence="1">
        <name>Zn(2+)</name>
        <dbReference type="ChEBI" id="CHEBI:29105"/>
    </cofactor>
    <text evidence="1">Binds 1 zinc ion per subunit.</text>
</comment>
<comment type="subunit">
    <text evidence="1">Monomer.</text>
</comment>
<comment type="subcellular location">
    <subcellularLocation>
        <location evidence="1">Cytoplasm</location>
    </subcellularLocation>
</comment>
<comment type="similarity">
    <text evidence="1">Belongs to the class-I aminoacyl-tRNA synthetase family. Glutamate--tRNA ligase type 1 subfamily.</text>
</comment>
<proteinExistence type="inferred from homology"/>
<keyword id="KW-0030">Aminoacyl-tRNA synthetase</keyword>
<keyword id="KW-0067">ATP-binding</keyword>
<keyword id="KW-0963">Cytoplasm</keyword>
<keyword id="KW-0436">Ligase</keyword>
<keyword id="KW-0479">Metal-binding</keyword>
<keyword id="KW-0547">Nucleotide-binding</keyword>
<keyword id="KW-0648">Protein biosynthesis</keyword>
<keyword id="KW-0862">Zinc</keyword>
<dbReference type="EC" id="6.1.1.17" evidence="1"/>
<dbReference type="EMBL" id="CP000976">
    <property type="protein sequence ID" value="ACH93319.1"/>
    <property type="molecule type" value="Genomic_DNA"/>
</dbReference>
<dbReference type="RefSeq" id="WP_012538130.1">
    <property type="nucleotide sequence ID" value="NC_011229.1"/>
</dbReference>
<dbReference type="SMR" id="B5RLR1"/>
<dbReference type="STRING" id="412419.BDU_367"/>
<dbReference type="KEGG" id="bdu:BDU_367"/>
<dbReference type="eggNOG" id="COG0008">
    <property type="taxonomic scope" value="Bacteria"/>
</dbReference>
<dbReference type="HOGENOM" id="CLU_015768_6_3_12"/>
<dbReference type="OrthoDB" id="9807503at2"/>
<dbReference type="Proteomes" id="UP000000611">
    <property type="component" value="Chromosome"/>
</dbReference>
<dbReference type="GO" id="GO:0005829">
    <property type="term" value="C:cytosol"/>
    <property type="evidence" value="ECO:0007669"/>
    <property type="project" value="TreeGrafter"/>
</dbReference>
<dbReference type="GO" id="GO:0005524">
    <property type="term" value="F:ATP binding"/>
    <property type="evidence" value="ECO:0007669"/>
    <property type="project" value="UniProtKB-UniRule"/>
</dbReference>
<dbReference type="GO" id="GO:0004818">
    <property type="term" value="F:glutamate-tRNA ligase activity"/>
    <property type="evidence" value="ECO:0007669"/>
    <property type="project" value="UniProtKB-UniRule"/>
</dbReference>
<dbReference type="GO" id="GO:0000049">
    <property type="term" value="F:tRNA binding"/>
    <property type="evidence" value="ECO:0007669"/>
    <property type="project" value="InterPro"/>
</dbReference>
<dbReference type="GO" id="GO:0008270">
    <property type="term" value="F:zinc ion binding"/>
    <property type="evidence" value="ECO:0007669"/>
    <property type="project" value="UniProtKB-UniRule"/>
</dbReference>
<dbReference type="GO" id="GO:0006424">
    <property type="term" value="P:glutamyl-tRNA aminoacylation"/>
    <property type="evidence" value="ECO:0007669"/>
    <property type="project" value="UniProtKB-UniRule"/>
</dbReference>
<dbReference type="CDD" id="cd00808">
    <property type="entry name" value="GluRS_core"/>
    <property type="match status" value="1"/>
</dbReference>
<dbReference type="FunFam" id="3.40.50.620:FF:000045">
    <property type="entry name" value="Glutamate--tRNA ligase, mitochondrial"/>
    <property type="match status" value="1"/>
</dbReference>
<dbReference type="Gene3D" id="1.10.10.350">
    <property type="match status" value="1"/>
</dbReference>
<dbReference type="Gene3D" id="1.10.8.70">
    <property type="entry name" value="Glutamate-tRNA synthetase, class I, anticodon-binding domain 1"/>
    <property type="match status" value="1"/>
</dbReference>
<dbReference type="Gene3D" id="3.40.50.620">
    <property type="entry name" value="HUPs"/>
    <property type="match status" value="1"/>
</dbReference>
<dbReference type="HAMAP" id="MF_00022">
    <property type="entry name" value="Glu_tRNA_synth_type1"/>
    <property type="match status" value="1"/>
</dbReference>
<dbReference type="InterPro" id="IPR045462">
    <property type="entry name" value="aa-tRNA-synth_I_cd-bd"/>
</dbReference>
<dbReference type="InterPro" id="IPR020751">
    <property type="entry name" value="aa-tRNA-synth_I_codon-bd_sub2"/>
</dbReference>
<dbReference type="InterPro" id="IPR008925">
    <property type="entry name" value="aa_tRNA-synth_I_cd-bd_sf"/>
</dbReference>
<dbReference type="InterPro" id="IPR004527">
    <property type="entry name" value="Glu-tRNA-ligase_bac/mito"/>
</dbReference>
<dbReference type="InterPro" id="IPR020752">
    <property type="entry name" value="Glu-tRNA-synth_I_codon-bd_sub1"/>
</dbReference>
<dbReference type="InterPro" id="IPR000924">
    <property type="entry name" value="Glu/Gln-tRNA-synth"/>
</dbReference>
<dbReference type="InterPro" id="IPR020058">
    <property type="entry name" value="Glu/Gln-tRNA-synth_Ib_cat-dom"/>
</dbReference>
<dbReference type="InterPro" id="IPR049940">
    <property type="entry name" value="GluQ/Sye"/>
</dbReference>
<dbReference type="InterPro" id="IPR033910">
    <property type="entry name" value="GluRS_core"/>
</dbReference>
<dbReference type="InterPro" id="IPR014729">
    <property type="entry name" value="Rossmann-like_a/b/a_fold"/>
</dbReference>
<dbReference type="NCBIfam" id="TIGR00464">
    <property type="entry name" value="gltX_bact"/>
    <property type="match status" value="1"/>
</dbReference>
<dbReference type="PANTHER" id="PTHR43311">
    <property type="entry name" value="GLUTAMATE--TRNA LIGASE"/>
    <property type="match status" value="1"/>
</dbReference>
<dbReference type="PANTHER" id="PTHR43311:SF2">
    <property type="entry name" value="GLUTAMATE--TRNA LIGASE, MITOCHONDRIAL-RELATED"/>
    <property type="match status" value="1"/>
</dbReference>
<dbReference type="Pfam" id="PF19269">
    <property type="entry name" value="Anticodon_2"/>
    <property type="match status" value="1"/>
</dbReference>
<dbReference type="Pfam" id="PF00749">
    <property type="entry name" value="tRNA-synt_1c"/>
    <property type="match status" value="1"/>
</dbReference>
<dbReference type="PRINTS" id="PR00987">
    <property type="entry name" value="TRNASYNTHGLU"/>
</dbReference>
<dbReference type="SUPFAM" id="SSF48163">
    <property type="entry name" value="An anticodon-binding domain of class I aminoacyl-tRNA synthetases"/>
    <property type="match status" value="1"/>
</dbReference>
<dbReference type="SUPFAM" id="SSF52374">
    <property type="entry name" value="Nucleotidylyl transferase"/>
    <property type="match status" value="1"/>
</dbReference>
<feature type="chain" id="PRO_0000367619" description="Glutamate--tRNA ligase">
    <location>
        <begin position="1"/>
        <end position="506"/>
    </location>
</feature>
<feature type="short sequence motif" description="'HIGH' region" evidence="1">
    <location>
        <begin position="24"/>
        <end position="34"/>
    </location>
</feature>
<feature type="short sequence motif" description="'KMSKS' region" evidence="1">
    <location>
        <begin position="266"/>
        <end position="270"/>
    </location>
</feature>
<feature type="binding site" evidence="1">
    <location>
        <position position="121"/>
    </location>
    <ligand>
        <name>Zn(2+)</name>
        <dbReference type="ChEBI" id="CHEBI:29105"/>
    </ligand>
</feature>
<feature type="binding site" evidence="1">
    <location>
        <position position="123"/>
    </location>
    <ligand>
        <name>Zn(2+)</name>
        <dbReference type="ChEBI" id="CHEBI:29105"/>
    </ligand>
</feature>
<feature type="binding site" evidence="1">
    <location>
        <position position="148"/>
    </location>
    <ligand>
        <name>Zn(2+)</name>
        <dbReference type="ChEBI" id="CHEBI:29105"/>
    </ligand>
</feature>
<feature type="binding site" evidence="1">
    <location>
        <position position="150"/>
    </location>
    <ligand>
        <name>Zn(2+)</name>
        <dbReference type="ChEBI" id="CHEBI:29105"/>
    </ligand>
</feature>
<feature type="binding site" evidence="1">
    <location>
        <position position="269"/>
    </location>
    <ligand>
        <name>ATP</name>
        <dbReference type="ChEBI" id="CHEBI:30616"/>
    </ligand>
</feature>
<reference key="1">
    <citation type="journal article" date="2008" name="PLoS Genet.">
        <title>The genome of Borrelia recurrentis, the agent of deadly louse-borne relapsing fever, is a degraded subset of tick-borne Borrelia duttonii.</title>
        <authorList>
            <person name="Lescot M."/>
            <person name="Audic S."/>
            <person name="Robert C."/>
            <person name="Nguyen T.T."/>
            <person name="Blanc G."/>
            <person name="Cutler S.J."/>
            <person name="Wincker P."/>
            <person name="Couloux A."/>
            <person name="Claverie J.-M."/>
            <person name="Raoult D."/>
            <person name="Drancourt M."/>
        </authorList>
    </citation>
    <scope>NUCLEOTIDE SEQUENCE [LARGE SCALE GENOMIC DNA]</scope>
    <source>
        <strain>Ly</strain>
    </source>
</reference>
<accession>B5RLR1</accession>
<evidence type="ECO:0000255" key="1">
    <source>
        <dbReference type="HAMAP-Rule" id="MF_00022"/>
    </source>
</evidence>
<protein>
    <recommendedName>
        <fullName evidence="1">Glutamate--tRNA ligase</fullName>
        <ecNumber evidence="1">6.1.1.17</ecNumber>
    </recommendedName>
    <alternativeName>
        <fullName evidence="1">Glutamyl-tRNA synthetase</fullName>
        <shortName evidence="1">GluRS</shortName>
    </alternativeName>
</protein>
<organism>
    <name type="scientific">Borrelia duttonii (strain Ly)</name>
    <dbReference type="NCBI Taxonomy" id="412419"/>
    <lineage>
        <taxon>Bacteria</taxon>
        <taxon>Pseudomonadati</taxon>
        <taxon>Spirochaetota</taxon>
        <taxon>Spirochaetia</taxon>
        <taxon>Spirochaetales</taxon>
        <taxon>Borreliaceae</taxon>
        <taxon>Borrelia</taxon>
    </lineage>
</organism>
<sequence>MIFQKRTFFIKRGCVLNIRVRYAPSPTGLQHIGGIRTALFNYFFAKSFNGKFLLRIEDTDQTRYYKEAEEDLYQSLAWLGIDFDEGPTCGGSYSPYIQSQRTEIYRKYAKELIESGNAYYCYCSPDRLERIRKIQTINKMAPGYDRHCRHLNKDEIKDALSLGISPVIRFKIPFDGETSFNDILLGKITWANKDISPDPVILKSDGFPTYHLANVVDDHLMEISHVLRAQEWISSGPLHVLLYNAFRWNPPIYCHLPMVMGSDGQKLSKRHGATALKQFIDDGYLPEAIINYVTLLGWSYDGKSEFFTKNELQKLFSIDKISKSPAVFDYNKLDFFNSHYIRTKEDHELAELLLPFLQKAGYIKKDSNSCDKEKLLLLVPLIKPRIRKLGDAVGMLRFFYTNISTWNLNEFLGKKKTVRDIYLLLEKIKPVLEGFETRILSENEQIFYNFAKENDLKIGEVLLPIRIAVLGSKVSPPLFDSLQLLGKVTVFDRINKAQDFLKKYEL</sequence>
<gene>
    <name evidence="1" type="primary">gltX</name>
    <name type="ordered locus">BDU_367</name>
</gene>